<accession>B1NWJ1</accession>
<dbReference type="EMBL" id="EU117376">
    <property type="protein sequence ID" value="ABV66195.1"/>
    <property type="molecule type" value="Genomic_DNA"/>
</dbReference>
<dbReference type="EMBL" id="EU117376">
    <property type="protein sequence ID" value="ABV66216.1"/>
    <property type="molecule type" value="Genomic_DNA"/>
</dbReference>
<dbReference type="SMR" id="B1NWJ1"/>
<dbReference type="KEGG" id="mesc:6000012"/>
<dbReference type="KEGG" id="mesc:6000022"/>
<dbReference type="OrthoDB" id="563959at2759"/>
<dbReference type="GO" id="GO:0009507">
    <property type="term" value="C:chloroplast"/>
    <property type="evidence" value="ECO:0007669"/>
    <property type="project" value="UniProtKB-SubCell"/>
</dbReference>
<dbReference type="GO" id="GO:0015934">
    <property type="term" value="C:large ribosomal subunit"/>
    <property type="evidence" value="ECO:0007669"/>
    <property type="project" value="InterPro"/>
</dbReference>
<dbReference type="GO" id="GO:0019843">
    <property type="term" value="F:rRNA binding"/>
    <property type="evidence" value="ECO:0007669"/>
    <property type="project" value="UniProtKB-UniRule"/>
</dbReference>
<dbReference type="GO" id="GO:0003735">
    <property type="term" value="F:structural constituent of ribosome"/>
    <property type="evidence" value="ECO:0007669"/>
    <property type="project" value="InterPro"/>
</dbReference>
<dbReference type="GO" id="GO:0016740">
    <property type="term" value="F:transferase activity"/>
    <property type="evidence" value="ECO:0007669"/>
    <property type="project" value="InterPro"/>
</dbReference>
<dbReference type="GO" id="GO:0006412">
    <property type="term" value="P:translation"/>
    <property type="evidence" value="ECO:0007669"/>
    <property type="project" value="UniProtKB-UniRule"/>
</dbReference>
<dbReference type="FunFam" id="4.10.950.10:FF:000001">
    <property type="entry name" value="50S ribosomal protein L2"/>
    <property type="match status" value="1"/>
</dbReference>
<dbReference type="FunFam" id="2.30.30.30:FF:000008">
    <property type="entry name" value="50S ribosomal protein L2, chloroplastic"/>
    <property type="match status" value="1"/>
</dbReference>
<dbReference type="FunFam" id="2.40.50.140:FF:000029">
    <property type="entry name" value="50S ribosomal protein L2, chloroplastic"/>
    <property type="match status" value="1"/>
</dbReference>
<dbReference type="Gene3D" id="2.30.30.30">
    <property type="match status" value="1"/>
</dbReference>
<dbReference type="Gene3D" id="2.40.50.140">
    <property type="entry name" value="Nucleic acid-binding proteins"/>
    <property type="match status" value="1"/>
</dbReference>
<dbReference type="Gene3D" id="4.10.950.10">
    <property type="entry name" value="Ribosomal protein L2, domain 3"/>
    <property type="match status" value="1"/>
</dbReference>
<dbReference type="HAMAP" id="MF_01320_B">
    <property type="entry name" value="Ribosomal_uL2_B"/>
    <property type="match status" value="1"/>
</dbReference>
<dbReference type="InterPro" id="IPR012340">
    <property type="entry name" value="NA-bd_OB-fold"/>
</dbReference>
<dbReference type="InterPro" id="IPR014722">
    <property type="entry name" value="Rib_uL2_dom2"/>
</dbReference>
<dbReference type="InterPro" id="IPR002171">
    <property type="entry name" value="Ribosomal_uL2"/>
</dbReference>
<dbReference type="InterPro" id="IPR005880">
    <property type="entry name" value="Ribosomal_uL2_bac/org-type"/>
</dbReference>
<dbReference type="InterPro" id="IPR022669">
    <property type="entry name" value="Ribosomal_uL2_C"/>
</dbReference>
<dbReference type="InterPro" id="IPR022671">
    <property type="entry name" value="Ribosomal_uL2_CS"/>
</dbReference>
<dbReference type="InterPro" id="IPR014726">
    <property type="entry name" value="Ribosomal_uL2_dom3"/>
</dbReference>
<dbReference type="InterPro" id="IPR022666">
    <property type="entry name" value="Ribosomal_uL2_RNA-bd_dom"/>
</dbReference>
<dbReference type="InterPro" id="IPR008991">
    <property type="entry name" value="Translation_prot_SH3-like_sf"/>
</dbReference>
<dbReference type="NCBIfam" id="TIGR01171">
    <property type="entry name" value="rplB_bact"/>
    <property type="match status" value="1"/>
</dbReference>
<dbReference type="PANTHER" id="PTHR13691:SF5">
    <property type="entry name" value="LARGE RIBOSOMAL SUBUNIT PROTEIN UL2M"/>
    <property type="match status" value="1"/>
</dbReference>
<dbReference type="PANTHER" id="PTHR13691">
    <property type="entry name" value="RIBOSOMAL PROTEIN L2"/>
    <property type="match status" value="1"/>
</dbReference>
<dbReference type="Pfam" id="PF00181">
    <property type="entry name" value="Ribosomal_L2"/>
    <property type="match status" value="1"/>
</dbReference>
<dbReference type="Pfam" id="PF03947">
    <property type="entry name" value="Ribosomal_L2_C"/>
    <property type="match status" value="1"/>
</dbReference>
<dbReference type="PIRSF" id="PIRSF002158">
    <property type="entry name" value="Ribosomal_L2"/>
    <property type="match status" value="1"/>
</dbReference>
<dbReference type="SMART" id="SM01383">
    <property type="entry name" value="Ribosomal_L2"/>
    <property type="match status" value="1"/>
</dbReference>
<dbReference type="SMART" id="SM01382">
    <property type="entry name" value="Ribosomal_L2_C"/>
    <property type="match status" value="1"/>
</dbReference>
<dbReference type="SUPFAM" id="SSF50249">
    <property type="entry name" value="Nucleic acid-binding proteins"/>
    <property type="match status" value="1"/>
</dbReference>
<dbReference type="SUPFAM" id="SSF50104">
    <property type="entry name" value="Translation proteins SH3-like domain"/>
    <property type="match status" value="1"/>
</dbReference>
<dbReference type="PROSITE" id="PS00467">
    <property type="entry name" value="RIBOSOMAL_L2"/>
    <property type="match status" value="1"/>
</dbReference>
<gene>
    <name type="primary">rpl2-A</name>
</gene>
<gene>
    <name type="primary">rpl2-B</name>
</gene>
<organism>
    <name type="scientific">Manihot esculenta</name>
    <name type="common">Cassava</name>
    <name type="synonym">Jatropha manihot</name>
    <dbReference type="NCBI Taxonomy" id="3983"/>
    <lineage>
        <taxon>Eukaryota</taxon>
        <taxon>Viridiplantae</taxon>
        <taxon>Streptophyta</taxon>
        <taxon>Embryophyta</taxon>
        <taxon>Tracheophyta</taxon>
        <taxon>Spermatophyta</taxon>
        <taxon>Magnoliopsida</taxon>
        <taxon>eudicotyledons</taxon>
        <taxon>Gunneridae</taxon>
        <taxon>Pentapetalae</taxon>
        <taxon>rosids</taxon>
        <taxon>fabids</taxon>
        <taxon>Malpighiales</taxon>
        <taxon>Euphorbiaceae</taxon>
        <taxon>Crotonoideae</taxon>
        <taxon>Manihoteae</taxon>
        <taxon>Manihot</taxon>
    </lineage>
</organism>
<sequence length="277" mass="30294">MAIHLYKTSTPSTRNGAVDSQAKSNTRNTRKNLIYGQHRCGKGRNARGIITARHRGGGHKRLYRKIDFRRNEKDIYGRIVTIEYDPNRNAYICLIHYGDGEKRYILHPRGAIIGDTIISGTEVPIKMGNALPLTDMPLGTAIHNIEITLGKGGQLARAAGAVAKLIAKEGKSATLKLPSGEVRLISKNCSATVGQVGNTGVNQKSLGRAGSKCWLGKRPVVRGVVMNPVDHPHGGGEGRAPIGRKKPATPWGYPALGRRSRKRNKYSDNLILRRRSK</sequence>
<reference key="1">
    <citation type="journal article" date="2008" name="Theor. Appl. Genet.">
        <title>The complete nucleotide sequence of the cassava (Manihot esculenta) chloroplast genome and the evolution of atpF in Malpighiales: RNA editing and multiple losses of a group II intron.</title>
        <authorList>
            <person name="Daniell H."/>
            <person name="Wurdack K.J."/>
            <person name="Kanagaraj A."/>
            <person name="Lee S.-B."/>
            <person name="Saski C."/>
            <person name="Jansen R.K."/>
        </authorList>
    </citation>
    <scope>NUCLEOTIDE SEQUENCE [LARGE SCALE GENOMIC DNA]</scope>
    <source>
        <strain>cv. TME3</strain>
    </source>
</reference>
<evidence type="ECO:0000250" key="1"/>
<evidence type="ECO:0000255" key="2">
    <source>
        <dbReference type="HAMAP-Rule" id="MF_01320"/>
    </source>
</evidence>
<evidence type="ECO:0000256" key="3">
    <source>
        <dbReference type="SAM" id="MobiDB-lite"/>
    </source>
</evidence>
<evidence type="ECO:0000305" key="4"/>
<comment type="subunit">
    <text evidence="1">Part of the 50S ribosomal subunit.</text>
</comment>
<comment type="subcellular location">
    <subcellularLocation>
        <location>Plastid</location>
        <location>Chloroplast</location>
    </subcellularLocation>
</comment>
<comment type="similarity">
    <text evidence="4">Belongs to the universal ribosomal protein uL2 family.</text>
</comment>
<keyword id="KW-0150">Chloroplast</keyword>
<keyword id="KW-0934">Plastid</keyword>
<keyword id="KW-0687">Ribonucleoprotein</keyword>
<keyword id="KW-0689">Ribosomal protein</keyword>
<proteinExistence type="inferred from homology"/>
<geneLocation type="chloroplast"/>
<protein>
    <recommendedName>
        <fullName evidence="2">Large ribosomal subunit protein uL2cz/uL2cy</fullName>
    </recommendedName>
    <alternativeName>
        <fullName evidence="4">50S ribosomal protein L2, chloroplastic</fullName>
    </alternativeName>
</protein>
<feature type="chain" id="PRO_0000342543" description="Large ribosomal subunit protein uL2cz/uL2cy">
    <location>
        <begin position="1"/>
        <end position="277"/>
    </location>
</feature>
<feature type="region of interest" description="Disordered" evidence="3">
    <location>
        <begin position="1"/>
        <end position="31"/>
    </location>
</feature>
<feature type="region of interest" description="Disordered" evidence="3">
    <location>
        <begin position="227"/>
        <end position="277"/>
    </location>
</feature>
<name>RK2_MANES</name>